<evidence type="ECO:0000255" key="1">
    <source>
        <dbReference type="HAMAP-Rule" id="MF_00163"/>
    </source>
</evidence>
<organism>
    <name type="scientific">Cytophaga hutchinsonii (strain ATCC 33406 / DSM 1761 / CIP 103989 / NBRC 15051 / NCIMB 9469 / D465)</name>
    <dbReference type="NCBI Taxonomy" id="269798"/>
    <lineage>
        <taxon>Bacteria</taxon>
        <taxon>Pseudomonadati</taxon>
        <taxon>Bacteroidota</taxon>
        <taxon>Cytophagia</taxon>
        <taxon>Cytophagales</taxon>
        <taxon>Cytophagaceae</taxon>
        <taxon>Cytophaga</taxon>
    </lineage>
</organism>
<reference key="1">
    <citation type="journal article" date="2007" name="Appl. Environ. Microbiol.">
        <title>Genome sequence of the cellulolytic gliding bacterium Cytophaga hutchinsonii.</title>
        <authorList>
            <person name="Xie G."/>
            <person name="Bruce D.C."/>
            <person name="Challacombe J.F."/>
            <person name="Chertkov O."/>
            <person name="Detter J.C."/>
            <person name="Gilna P."/>
            <person name="Han C.S."/>
            <person name="Lucas S."/>
            <person name="Misra M."/>
            <person name="Myers G.L."/>
            <person name="Richardson P."/>
            <person name="Tapia R."/>
            <person name="Thayer N."/>
            <person name="Thompson L.S."/>
            <person name="Brettin T.S."/>
            <person name="Henrissat B."/>
            <person name="Wilson D.B."/>
            <person name="McBride M.J."/>
        </authorList>
    </citation>
    <scope>NUCLEOTIDE SEQUENCE [LARGE SCALE GENOMIC DNA]</scope>
    <source>
        <strain>ATCC 33406 / DSM 1761 / JCM 20678 / CIP 103989 / IAM 12607 / NBRC 15051 / NCIMB 9469 / D465</strain>
    </source>
</reference>
<gene>
    <name evidence="1" type="primary">def</name>
    <name type="ordered locus">CHU_0693</name>
</gene>
<protein>
    <recommendedName>
        <fullName evidence="1">Peptide deformylase</fullName>
        <shortName evidence="1">PDF</shortName>
        <ecNumber evidence="1">3.5.1.88</ecNumber>
    </recommendedName>
    <alternativeName>
        <fullName evidence="1">Polypeptide deformylase</fullName>
    </alternativeName>
</protein>
<feature type="chain" id="PRO_0000301022" description="Peptide deformylase">
    <location>
        <begin position="1"/>
        <end position="184"/>
    </location>
</feature>
<feature type="active site" evidence="1">
    <location>
        <position position="139"/>
    </location>
</feature>
<feature type="binding site" evidence="1">
    <location>
        <position position="96"/>
    </location>
    <ligand>
        <name>Fe cation</name>
        <dbReference type="ChEBI" id="CHEBI:24875"/>
    </ligand>
</feature>
<feature type="binding site" evidence="1">
    <location>
        <position position="138"/>
    </location>
    <ligand>
        <name>Fe cation</name>
        <dbReference type="ChEBI" id="CHEBI:24875"/>
    </ligand>
</feature>
<feature type="binding site" evidence="1">
    <location>
        <position position="142"/>
    </location>
    <ligand>
        <name>Fe cation</name>
        <dbReference type="ChEBI" id="CHEBI:24875"/>
    </ligand>
</feature>
<dbReference type="EC" id="3.5.1.88" evidence="1"/>
<dbReference type="EMBL" id="CP000383">
    <property type="protein sequence ID" value="ABG57980.1"/>
    <property type="molecule type" value="Genomic_DNA"/>
</dbReference>
<dbReference type="RefSeq" id="WP_011584096.1">
    <property type="nucleotide sequence ID" value="NC_008255.1"/>
</dbReference>
<dbReference type="SMR" id="Q11X86"/>
<dbReference type="STRING" id="269798.CHU_0693"/>
<dbReference type="KEGG" id="chu:CHU_0693"/>
<dbReference type="eggNOG" id="COG0242">
    <property type="taxonomic scope" value="Bacteria"/>
</dbReference>
<dbReference type="HOGENOM" id="CLU_061901_2_0_10"/>
<dbReference type="OrthoDB" id="9784988at2"/>
<dbReference type="Proteomes" id="UP000001822">
    <property type="component" value="Chromosome"/>
</dbReference>
<dbReference type="GO" id="GO:0046872">
    <property type="term" value="F:metal ion binding"/>
    <property type="evidence" value="ECO:0007669"/>
    <property type="project" value="UniProtKB-KW"/>
</dbReference>
<dbReference type="GO" id="GO:0042586">
    <property type="term" value="F:peptide deformylase activity"/>
    <property type="evidence" value="ECO:0007669"/>
    <property type="project" value="UniProtKB-UniRule"/>
</dbReference>
<dbReference type="GO" id="GO:0043686">
    <property type="term" value="P:co-translational protein modification"/>
    <property type="evidence" value="ECO:0007669"/>
    <property type="project" value="TreeGrafter"/>
</dbReference>
<dbReference type="GO" id="GO:0006412">
    <property type="term" value="P:translation"/>
    <property type="evidence" value="ECO:0007669"/>
    <property type="project" value="UniProtKB-UniRule"/>
</dbReference>
<dbReference type="CDD" id="cd00487">
    <property type="entry name" value="Pep_deformylase"/>
    <property type="match status" value="1"/>
</dbReference>
<dbReference type="Gene3D" id="3.90.45.10">
    <property type="entry name" value="Peptide deformylase"/>
    <property type="match status" value="1"/>
</dbReference>
<dbReference type="HAMAP" id="MF_00163">
    <property type="entry name" value="Pep_deformylase"/>
    <property type="match status" value="1"/>
</dbReference>
<dbReference type="InterPro" id="IPR023635">
    <property type="entry name" value="Peptide_deformylase"/>
</dbReference>
<dbReference type="InterPro" id="IPR036821">
    <property type="entry name" value="Peptide_deformylase_sf"/>
</dbReference>
<dbReference type="NCBIfam" id="TIGR00079">
    <property type="entry name" value="pept_deformyl"/>
    <property type="match status" value="1"/>
</dbReference>
<dbReference type="NCBIfam" id="NF001159">
    <property type="entry name" value="PRK00150.1-3"/>
    <property type="match status" value="1"/>
</dbReference>
<dbReference type="PANTHER" id="PTHR10458">
    <property type="entry name" value="PEPTIDE DEFORMYLASE"/>
    <property type="match status" value="1"/>
</dbReference>
<dbReference type="PANTHER" id="PTHR10458:SF22">
    <property type="entry name" value="PEPTIDE DEFORMYLASE"/>
    <property type="match status" value="1"/>
</dbReference>
<dbReference type="Pfam" id="PF01327">
    <property type="entry name" value="Pep_deformylase"/>
    <property type="match status" value="1"/>
</dbReference>
<dbReference type="PIRSF" id="PIRSF004749">
    <property type="entry name" value="Pep_def"/>
    <property type="match status" value="1"/>
</dbReference>
<dbReference type="PRINTS" id="PR01576">
    <property type="entry name" value="PDEFORMYLASE"/>
</dbReference>
<dbReference type="SUPFAM" id="SSF56420">
    <property type="entry name" value="Peptide deformylase"/>
    <property type="match status" value="1"/>
</dbReference>
<keyword id="KW-0378">Hydrolase</keyword>
<keyword id="KW-0408">Iron</keyword>
<keyword id="KW-0479">Metal-binding</keyword>
<keyword id="KW-0648">Protein biosynthesis</keyword>
<keyword id="KW-1185">Reference proteome</keyword>
<name>DEF_CYTH3</name>
<comment type="function">
    <text evidence="1">Removes the formyl group from the N-terminal Met of newly synthesized proteins. Requires at least a dipeptide for an efficient rate of reaction. N-terminal L-methionine is a prerequisite for activity but the enzyme has broad specificity at other positions.</text>
</comment>
<comment type="catalytic activity">
    <reaction evidence="1">
        <text>N-terminal N-formyl-L-methionyl-[peptide] + H2O = N-terminal L-methionyl-[peptide] + formate</text>
        <dbReference type="Rhea" id="RHEA:24420"/>
        <dbReference type="Rhea" id="RHEA-COMP:10639"/>
        <dbReference type="Rhea" id="RHEA-COMP:10640"/>
        <dbReference type="ChEBI" id="CHEBI:15377"/>
        <dbReference type="ChEBI" id="CHEBI:15740"/>
        <dbReference type="ChEBI" id="CHEBI:49298"/>
        <dbReference type="ChEBI" id="CHEBI:64731"/>
        <dbReference type="EC" id="3.5.1.88"/>
    </reaction>
</comment>
<comment type="cofactor">
    <cofactor evidence="1">
        <name>Fe(2+)</name>
        <dbReference type="ChEBI" id="CHEBI:29033"/>
    </cofactor>
    <text evidence="1">Binds 1 Fe(2+) ion.</text>
</comment>
<comment type="similarity">
    <text evidence="1">Belongs to the polypeptide deformylase family.</text>
</comment>
<proteinExistence type="inferred from homology"/>
<sequence length="184" mass="21083">MIYPIVAYGDPVLKKVAQDIEKGSLDVVKMSADMFETMENAHGVGLAAPQVALNLRMFVIDTSVFDDEKITPVRKTFINPVIEEEWGDEWPYEEGCLSIPGVRADVYRPANLRIRYFDTDWKEHVEEFDGMTARVIQHEYDHIEGVLFVDHLSSIKKRLLKGKLTNISKGDCDASYRMKFPIKK</sequence>
<accession>Q11X86</accession>